<name>MBL2_BOVIN</name>
<sequence length="249" mass="26471">MSLFTSLPFLLLTAVTASCADTETENCENIRKTCPVIACGPPGINGIPGKDGRDGAKGEKGEPGQGLRGSQGPPGKMGPQGTPGIPGIPGPIGQKGDPGENMGDYIRLATSERATLQSELNQIKNWLIFSLGKRVGKKAFFTNGKKMPFNEVKTLCAQFQGRVATPMNAEENRALKDLVTEEAFLGITDQETEGKFVDLTGKGVTYQNWNDGEPNNASPGEHCVTLLSDGTWNDIACSASFLTVCEFSL</sequence>
<gene>
    <name type="primary">MBL</name>
</gene>
<comment type="function">
    <text evidence="1">Calcium-dependent lectin involved in innate immune defense. Binds mannose, fucose and N-acetylglucosamine on different microorganisms and activates the lectin complement pathway. Binds to late apoptotic cells, as well as to apoptotic blebs and to necrotic cells, but not to early apoptotic cells, facilitating their uptake by macrophages (By similarity).</text>
</comment>
<comment type="subunit">
    <text evidence="1">Oligomeric complex of 3 or more homotrimers. Interacts with MASP1 and MASP2 (By similarity). Interacts with MEP1A and MEP1B and may inhibit their catalytic activity (By similarity).</text>
</comment>
<comment type="subcellular location">
    <subcellularLocation>
        <location evidence="1">Secreted</location>
    </subcellularLocation>
</comment>
<comment type="domain">
    <text evidence="1">The coiled-coil domain mediates trimerization.</text>
</comment>
<comment type="PTM">
    <text evidence="1">Hydroxylation on proline residues within the sequence motif, GXPG, is most likely to be 4-hydroxy as this fits the requirement for 4-hydroxylation in vertebrates.</text>
</comment>
<protein>
    <recommendedName>
        <fullName>Mannose-binding protein C</fullName>
        <shortName>MBP-C</shortName>
    </recommendedName>
    <alternativeName>
        <fullName>Mannan-binding protein</fullName>
    </alternativeName>
</protein>
<accession>O02659</accession>
<accession>A4IFQ1</accession>
<proteinExistence type="evidence at transcript level"/>
<reference key="1">
    <citation type="journal article" date="1997" name="Gene">
        <title>Cloning and characterization of a cDNA encoding bovine mannan-binding protein.</title>
        <authorList>
            <person name="Kawai T."/>
            <person name="Suzuki Y."/>
            <person name="Eda S."/>
            <person name="Ohtani K."/>
            <person name="Kase T."/>
            <person name="Fujinaga Y."/>
            <person name="Sakamoto T."/>
            <person name="Kurimura T."/>
            <person name="Wakamiya N."/>
        </authorList>
    </citation>
    <scope>NUCLEOTIDE SEQUENCE [MRNA]</scope>
    <source>
        <tissue>Liver</tissue>
    </source>
</reference>
<reference key="2">
    <citation type="submission" date="2007-03" db="EMBL/GenBank/DDBJ databases">
        <authorList>
            <consortium name="NIH - Mammalian Gene Collection (MGC) project"/>
        </authorList>
    </citation>
    <scope>NUCLEOTIDE SEQUENCE [LARGE SCALE MRNA]</scope>
    <source>
        <strain>Hereford</strain>
        <tissue>Testis</tissue>
    </source>
</reference>
<evidence type="ECO:0000250" key="1"/>
<evidence type="ECO:0000255" key="2"/>
<evidence type="ECO:0000255" key="3">
    <source>
        <dbReference type="PROSITE-ProRule" id="PRU00040"/>
    </source>
</evidence>
<evidence type="ECO:0000256" key="4">
    <source>
        <dbReference type="SAM" id="MobiDB-lite"/>
    </source>
</evidence>
<organism>
    <name type="scientific">Bos taurus</name>
    <name type="common">Bovine</name>
    <dbReference type="NCBI Taxonomy" id="9913"/>
    <lineage>
        <taxon>Eukaryota</taxon>
        <taxon>Metazoa</taxon>
        <taxon>Chordata</taxon>
        <taxon>Craniata</taxon>
        <taxon>Vertebrata</taxon>
        <taxon>Euteleostomi</taxon>
        <taxon>Mammalia</taxon>
        <taxon>Eutheria</taxon>
        <taxon>Laurasiatheria</taxon>
        <taxon>Artiodactyla</taxon>
        <taxon>Ruminantia</taxon>
        <taxon>Pecora</taxon>
        <taxon>Bovidae</taxon>
        <taxon>Bovinae</taxon>
        <taxon>Bos</taxon>
    </lineage>
</organism>
<dbReference type="EMBL" id="D73408">
    <property type="protein sequence ID" value="BAA18935.1"/>
    <property type="molecule type" value="mRNA"/>
</dbReference>
<dbReference type="EMBL" id="BC134704">
    <property type="protein sequence ID" value="AAI34705.1"/>
    <property type="molecule type" value="mRNA"/>
</dbReference>
<dbReference type="RefSeq" id="NP_776532.1">
    <property type="nucleotide sequence ID" value="NM_174107.2"/>
</dbReference>
<dbReference type="RefSeq" id="XP_005225409.1">
    <property type="nucleotide sequence ID" value="XM_005225352.3"/>
</dbReference>
<dbReference type="SMR" id="O02659"/>
<dbReference type="FunCoup" id="O02659">
    <property type="interactions" value="246"/>
</dbReference>
<dbReference type="STRING" id="9913.ENSBTAP00000009270"/>
<dbReference type="PaxDb" id="9913-ENSBTAP00000009270"/>
<dbReference type="PeptideAtlas" id="O02659"/>
<dbReference type="Ensembl" id="ENSBTAT00000009270.3">
    <property type="protein sequence ID" value="ENSBTAP00000009270.1"/>
    <property type="gene ID" value="ENSBTAG00000007049.5"/>
</dbReference>
<dbReference type="GeneID" id="281297"/>
<dbReference type="KEGG" id="bta:281297"/>
<dbReference type="CTD" id="4153"/>
<dbReference type="VEuPathDB" id="HostDB:ENSBTAG00000007049"/>
<dbReference type="VGNC" id="VGNC:31280">
    <property type="gene designation" value="MBL2"/>
</dbReference>
<dbReference type="eggNOG" id="KOG4297">
    <property type="taxonomic scope" value="Eukaryota"/>
</dbReference>
<dbReference type="GeneTree" id="ENSGT00940000154368"/>
<dbReference type="HOGENOM" id="CLU_049894_3_0_1"/>
<dbReference type="InParanoid" id="O02659"/>
<dbReference type="OMA" id="CAKFQAS"/>
<dbReference type="OrthoDB" id="10255512at2759"/>
<dbReference type="TreeFam" id="TF330481"/>
<dbReference type="Reactome" id="R-BTA-166662">
    <property type="pathway name" value="Lectin pathway of complement activation"/>
</dbReference>
<dbReference type="Reactome" id="R-BTA-166663">
    <property type="pathway name" value="Initial triggering of complement"/>
</dbReference>
<dbReference type="Proteomes" id="UP000009136">
    <property type="component" value="Chromosome 26"/>
</dbReference>
<dbReference type="Bgee" id="ENSBTAG00000007049">
    <property type="expression patterns" value="Expressed in liver and 23 other cell types or tissues"/>
</dbReference>
<dbReference type="GO" id="GO:0005581">
    <property type="term" value="C:collagen trimer"/>
    <property type="evidence" value="ECO:0007669"/>
    <property type="project" value="UniProtKB-KW"/>
</dbReference>
<dbReference type="GO" id="GO:0005615">
    <property type="term" value="C:extracellular space"/>
    <property type="evidence" value="ECO:0000318"/>
    <property type="project" value="GO_Central"/>
</dbReference>
<dbReference type="GO" id="GO:0005771">
    <property type="term" value="C:multivesicular body"/>
    <property type="evidence" value="ECO:0000318"/>
    <property type="project" value="GO_Central"/>
</dbReference>
<dbReference type="GO" id="GO:1905370">
    <property type="term" value="C:serine-type endopeptidase complex"/>
    <property type="evidence" value="ECO:0007669"/>
    <property type="project" value="Ensembl"/>
</dbReference>
<dbReference type="GO" id="GO:0048306">
    <property type="term" value="F:calcium-dependent protein binding"/>
    <property type="evidence" value="ECO:0007669"/>
    <property type="project" value="Ensembl"/>
</dbReference>
<dbReference type="GO" id="GO:0005537">
    <property type="term" value="F:D-mannose binding"/>
    <property type="evidence" value="ECO:0007669"/>
    <property type="project" value="UniProtKB-KW"/>
</dbReference>
<dbReference type="GO" id="GO:0042802">
    <property type="term" value="F:identical protein binding"/>
    <property type="evidence" value="ECO:0007669"/>
    <property type="project" value="Ensembl"/>
</dbReference>
<dbReference type="GO" id="GO:0005102">
    <property type="term" value="F:signaling receptor binding"/>
    <property type="evidence" value="ECO:0007669"/>
    <property type="project" value="Ensembl"/>
</dbReference>
<dbReference type="GO" id="GO:0140374">
    <property type="term" value="P:antiviral innate immune response"/>
    <property type="evidence" value="ECO:0007669"/>
    <property type="project" value="Ensembl"/>
</dbReference>
<dbReference type="GO" id="GO:0002752">
    <property type="term" value="P:cell surface pattern recognition receptor signaling pathway"/>
    <property type="evidence" value="ECO:0007669"/>
    <property type="project" value="Ensembl"/>
</dbReference>
<dbReference type="GO" id="GO:0006958">
    <property type="term" value="P:complement activation, classical pathway"/>
    <property type="evidence" value="ECO:0007669"/>
    <property type="project" value="UniProtKB-KW"/>
</dbReference>
<dbReference type="GO" id="GO:0001867">
    <property type="term" value="P:complement activation, lectin pathway"/>
    <property type="evidence" value="ECO:0007669"/>
    <property type="project" value="UniProtKB-KW"/>
</dbReference>
<dbReference type="GO" id="GO:0050830">
    <property type="term" value="P:defense response to Gram-positive bacterium"/>
    <property type="evidence" value="ECO:0007669"/>
    <property type="project" value="Ensembl"/>
</dbReference>
<dbReference type="GO" id="GO:0048525">
    <property type="term" value="P:negative regulation of viral process"/>
    <property type="evidence" value="ECO:0007669"/>
    <property type="project" value="Ensembl"/>
</dbReference>
<dbReference type="GO" id="GO:1903028">
    <property type="term" value="P:positive regulation of opsonization"/>
    <property type="evidence" value="ECO:0007669"/>
    <property type="project" value="Ensembl"/>
</dbReference>
<dbReference type="GO" id="GO:0050766">
    <property type="term" value="P:positive regulation of phagocytosis"/>
    <property type="evidence" value="ECO:0000318"/>
    <property type="project" value="GO_Central"/>
</dbReference>
<dbReference type="GO" id="GO:0006508">
    <property type="term" value="P:proteolysis"/>
    <property type="evidence" value="ECO:0007669"/>
    <property type="project" value="Ensembl"/>
</dbReference>
<dbReference type="GO" id="GO:0043129">
    <property type="term" value="P:surfactant homeostasis"/>
    <property type="evidence" value="ECO:0000318"/>
    <property type="project" value="GO_Central"/>
</dbReference>
<dbReference type="FunFam" id="3.10.100.10:FF:000088">
    <property type="entry name" value="Mannose-binding protein A"/>
    <property type="match status" value="1"/>
</dbReference>
<dbReference type="Gene3D" id="3.10.100.10">
    <property type="entry name" value="Mannose-Binding Protein A, subunit A"/>
    <property type="match status" value="1"/>
</dbReference>
<dbReference type="InterPro" id="IPR001304">
    <property type="entry name" value="C-type_lectin-like"/>
</dbReference>
<dbReference type="InterPro" id="IPR016186">
    <property type="entry name" value="C-type_lectin-like/link_sf"/>
</dbReference>
<dbReference type="InterPro" id="IPR018378">
    <property type="entry name" value="C-type_lectin_CS"/>
</dbReference>
<dbReference type="InterPro" id="IPR051077">
    <property type="entry name" value="Ca-dependent_lectin"/>
</dbReference>
<dbReference type="InterPro" id="IPR008160">
    <property type="entry name" value="Collagen"/>
</dbReference>
<dbReference type="InterPro" id="IPR016187">
    <property type="entry name" value="CTDL_fold"/>
</dbReference>
<dbReference type="PANTHER" id="PTHR24024:SF34">
    <property type="entry name" value="MANNOSE-BINDING PROTEIN C"/>
    <property type="match status" value="1"/>
</dbReference>
<dbReference type="PANTHER" id="PTHR24024">
    <property type="entry name" value="PULMONARY SURFACTANT-ASSOCIATED PROTEIN A"/>
    <property type="match status" value="1"/>
</dbReference>
<dbReference type="Pfam" id="PF01391">
    <property type="entry name" value="Collagen"/>
    <property type="match status" value="1"/>
</dbReference>
<dbReference type="Pfam" id="PF00059">
    <property type="entry name" value="Lectin_C"/>
    <property type="match status" value="1"/>
</dbReference>
<dbReference type="SMART" id="SM00034">
    <property type="entry name" value="CLECT"/>
    <property type="match status" value="1"/>
</dbReference>
<dbReference type="SUPFAM" id="SSF56436">
    <property type="entry name" value="C-type lectin-like"/>
    <property type="match status" value="1"/>
</dbReference>
<dbReference type="PROSITE" id="PS00615">
    <property type="entry name" value="C_TYPE_LECTIN_1"/>
    <property type="match status" value="1"/>
</dbReference>
<dbReference type="PROSITE" id="PS50041">
    <property type="entry name" value="C_TYPE_LECTIN_2"/>
    <property type="match status" value="1"/>
</dbReference>
<feature type="signal peptide" evidence="2">
    <location>
        <begin position="1"/>
        <end position="20"/>
    </location>
</feature>
<feature type="chain" id="PRO_0000017397" description="Mannose-binding protein C">
    <location>
        <begin position="21"/>
        <end position="249"/>
    </location>
</feature>
<feature type="domain" description="Collagen-like">
    <location>
        <begin position="43"/>
        <end position="101"/>
    </location>
</feature>
<feature type="domain" description="C-type lectin" evidence="3">
    <location>
        <begin position="135"/>
        <end position="246"/>
    </location>
</feature>
<feature type="region of interest" description="Disordered" evidence="4">
    <location>
        <begin position="43"/>
        <end position="103"/>
    </location>
</feature>
<feature type="coiled-coil region" evidence="1">
    <location>
        <begin position="113"/>
        <end position="131"/>
    </location>
</feature>
<feature type="compositionally biased region" description="Basic and acidic residues" evidence="4">
    <location>
        <begin position="50"/>
        <end position="62"/>
    </location>
</feature>
<feature type="compositionally biased region" description="Low complexity" evidence="4">
    <location>
        <begin position="79"/>
        <end position="95"/>
    </location>
</feature>
<feature type="modified residue" description="4-hydroxyproline" evidence="2">
    <location>
        <position position="48"/>
    </location>
</feature>
<feature type="modified residue" description="4-hydroxyproline" evidence="2">
    <location>
        <position position="63"/>
    </location>
</feature>
<feature type="modified residue" description="4-hydroxyproline" evidence="2">
    <location>
        <position position="74"/>
    </location>
</feature>
<feature type="modified residue" description="4-hydroxyproline" evidence="2">
    <location>
        <position position="83"/>
    </location>
</feature>
<feature type="modified residue" description="4-hydroxyproline" evidence="2">
    <location>
        <position position="86"/>
    </location>
</feature>
<feature type="disulfide bond" description="Interchain" evidence="3">
    <location>
        <position position="34"/>
    </location>
</feature>
<feature type="disulfide bond" description="Interchain" evidence="3">
    <location>
        <position position="39"/>
    </location>
</feature>
<feature type="disulfide bond" evidence="3">
    <location>
        <begin position="156"/>
        <end position="245"/>
    </location>
</feature>
<feature type="disulfide bond" evidence="3">
    <location>
        <begin position="223"/>
        <end position="237"/>
    </location>
</feature>
<keyword id="KW-0106">Calcium</keyword>
<keyword id="KW-0175">Coiled coil</keyword>
<keyword id="KW-0176">Collagen</keyword>
<keyword id="KW-1018">Complement activation lectin pathway</keyword>
<keyword id="KW-0180">Complement pathway</keyword>
<keyword id="KW-1015">Disulfide bond</keyword>
<keyword id="KW-0379">Hydroxylation</keyword>
<keyword id="KW-0391">Immunity</keyword>
<keyword id="KW-0399">Innate immunity</keyword>
<keyword id="KW-0430">Lectin</keyword>
<keyword id="KW-0465">Mannose-binding</keyword>
<keyword id="KW-1185">Reference proteome</keyword>
<keyword id="KW-0677">Repeat</keyword>
<keyword id="KW-0964">Secreted</keyword>
<keyword id="KW-0732">Signal</keyword>